<reference key="1">
    <citation type="journal article" date="1991" name="Proc. Natl. Acad. Sci. U.S.A.">
        <title>Isolation and characterization of cDNA clones encoding a functional p34cdc2 homologue from Zea mays.</title>
        <authorList>
            <person name="Colasanti J."/>
            <person name="Tyers M."/>
            <person name="Sundaresan V."/>
        </authorList>
    </citation>
    <scope>NUCLEOTIDE SEQUENCE [MRNA]</scope>
</reference>
<gene>
    <name type="primary">CDC2</name>
</gene>
<sequence>MEQYEKVEKIGEGTYGVVYKALDKATNETIALKKIRLEQEDEGVPSTAIREISLLKEMNHGNIVRLHDVVHSEKRIYLVFEYLDLDLKKFMDSCPEFAKNPTLIKSYLYQILHGVAYCHSHRVLHRDLKPQNLLIDRRTNALKLADFGLARAFGIPVRTFTHEVVTLWYRAPEILLGARQYSTPVDVWSVGCIFAEMVNQKPLFPGDSEIDELFKIFRILGTPNEQSWPGVSCLPDFKTAFPRWQAQDLATVVPNLDPAGLDLLSKMLRYEPSKRITARQALEHEYFKDLEVVQ</sequence>
<protein>
    <recommendedName>
        <fullName>Cell division control protein 2 homolog</fullName>
        <ecNumber>2.7.11.22</ecNumber>
        <ecNumber>2.7.11.23</ecNumber>
    </recommendedName>
    <alternativeName>
        <fullName>p34cdc2</fullName>
    </alternativeName>
</protein>
<dbReference type="EC" id="2.7.11.22"/>
<dbReference type="EC" id="2.7.11.23"/>
<dbReference type="EMBL" id="M60526">
    <property type="protein sequence ID" value="AAA33479.1"/>
    <property type="molecule type" value="mRNA"/>
</dbReference>
<dbReference type="PIR" id="A40444">
    <property type="entry name" value="A40444"/>
</dbReference>
<dbReference type="PIR" id="B40444">
    <property type="entry name" value="B40444"/>
</dbReference>
<dbReference type="RefSeq" id="NP_001105342.1">
    <property type="nucleotide sequence ID" value="NM_001111872.1"/>
</dbReference>
<dbReference type="SMR" id="P23111"/>
<dbReference type="FunCoup" id="P23111">
    <property type="interactions" value="3492"/>
</dbReference>
<dbReference type="STRING" id="4577.P23111"/>
<dbReference type="PaxDb" id="4577-GRMZM2G008327_P01"/>
<dbReference type="EnsemblPlants" id="Zm00001eb001260_T001">
    <property type="protein sequence ID" value="Zm00001eb001260_P001"/>
    <property type="gene ID" value="Zm00001eb001260"/>
</dbReference>
<dbReference type="GeneID" id="542270"/>
<dbReference type="Gramene" id="Zm00001eb001260_T001">
    <property type="protein sequence ID" value="Zm00001eb001260_P001"/>
    <property type="gene ID" value="Zm00001eb001260"/>
</dbReference>
<dbReference type="KEGG" id="zma:542270"/>
<dbReference type="MaizeGDB" id="60686"/>
<dbReference type="eggNOG" id="KOG0594">
    <property type="taxonomic scope" value="Eukaryota"/>
</dbReference>
<dbReference type="HOGENOM" id="CLU_000288_181_1_1"/>
<dbReference type="InParanoid" id="P23111"/>
<dbReference type="OrthoDB" id="1732493at2759"/>
<dbReference type="BRENDA" id="2.7.11.22">
    <property type="organism ID" value="6752"/>
</dbReference>
<dbReference type="Proteomes" id="UP000007305">
    <property type="component" value="Chromosome 1"/>
</dbReference>
<dbReference type="ExpressionAtlas" id="P23111">
    <property type="expression patterns" value="baseline and differential"/>
</dbReference>
<dbReference type="GO" id="GO:0000307">
    <property type="term" value="C:cyclin-dependent protein kinase holoenzyme complex"/>
    <property type="evidence" value="ECO:0000318"/>
    <property type="project" value="GO_Central"/>
</dbReference>
<dbReference type="GO" id="GO:0005737">
    <property type="term" value="C:cytoplasm"/>
    <property type="evidence" value="ECO:0000318"/>
    <property type="project" value="GO_Central"/>
</dbReference>
<dbReference type="GO" id="GO:0005634">
    <property type="term" value="C:nucleus"/>
    <property type="evidence" value="ECO:0000318"/>
    <property type="project" value="GO_Central"/>
</dbReference>
<dbReference type="GO" id="GO:0005524">
    <property type="term" value="F:ATP binding"/>
    <property type="evidence" value="ECO:0007669"/>
    <property type="project" value="UniProtKB-KW"/>
</dbReference>
<dbReference type="GO" id="GO:0030332">
    <property type="term" value="F:cyclin binding"/>
    <property type="evidence" value="ECO:0000318"/>
    <property type="project" value="GO_Central"/>
</dbReference>
<dbReference type="GO" id="GO:0004693">
    <property type="term" value="F:cyclin-dependent protein serine/threonine kinase activity"/>
    <property type="evidence" value="ECO:0000318"/>
    <property type="project" value="GO_Central"/>
</dbReference>
<dbReference type="GO" id="GO:0106310">
    <property type="term" value="F:protein serine kinase activity"/>
    <property type="evidence" value="ECO:0007669"/>
    <property type="project" value="RHEA"/>
</dbReference>
<dbReference type="GO" id="GO:0008353">
    <property type="term" value="F:RNA polymerase II CTD heptapeptide repeat kinase activity"/>
    <property type="evidence" value="ECO:0007669"/>
    <property type="project" value="UniProtKB-EC"/>
</dbReference>
<dbReference type="GO" id="GO:0051301">
    <property type="term" value="P:cell division"/>
    <property type="evidence" value="ECO:0007669"/>
    <property type="project" value="UniProtKB-KW"/>
</dbReference>
<dbReference type="GO" id="GO:0000082">
    <property type="term" value="P:G1/S transition of mitotic cell cycle"/>
    <property type="evidence" value="ECO:0000318"/>
    <property type="project" value="GO_Central"/>
</dbReference>
<dbReference type="GO" id="GO:0010389">
    <property type="term" value="P:regulation of G2/M transition of mitotic cell cycle"/>
    <property type="evidence" value="ECO:0000318"/>
    <property type="project" value="GO_Central"/>
</dbReference>
<dbReference type="GO" id="GO:0010468">
    <property type="term" value="P:regulation of gene expression"/>
    <property type="evidence" value="ECO:0000318"/>
    <property type="project" value="GO_Central"/>
</dbReference>
<dbReference type="GO" id="GO:0051445">
    <property type="term" value="P:regulation of meiotic cell cycle"/>
    <property type="evidence" value="ECO:0000318"/>
    <property type="project" value="GO_Central"/>
</dbReference>
<dbReference type="GO" id="GO:0007165">
    <property type="term" value="P:signal transduction"/>
    <property type="evidence" value="ECO:0000318"/>
    <property type="project" value="GO_Central"/>
</dbReference>
<dbReference type="CDD" id="cd07835">
    <property type="entry name" value="STKc_CDK1_CdkB_like"/>
    <property type="match status" value="1"/>
</dbReference>
<dbReference type="FunFam" id="3.30.200.20:FF:000187">
    <property type="entry name" value="Cell division control protein 2"/>
    <property type="match status" value="1"/>
</dbReference>
<dbReference type="FunFam" id="1.10.510.10:FF:000280">
    <property type="entry name" value="Cell division control protein 2 homolog"/>
    <property type="match status" value="1"/>
</dbReference>
<dbReference type="Gene3D" id="3.30.200.20">
    <property type="entry name" value="Phosphorylase Kinase, domain 1"/>
    <property type="match status" value="1"/>
</dbReference>
<dbReference type="Gene3D" id="1.10.510.10">
    <property type="entry name" value="Transferase(Phosphotransferase) domain 1"/>
    <property type="match status" value="1"/>
</dbReference>
<dbReference type="InterPro" id="IPR050108">
    <property type="entry name" value="CDK"/>
</dbReference>
<dbReference type="InterPro" id="IPR011009">
    <property type="entry name" value="Kinase-like_dom_sf"/>
</dbReference>
<dbReference type="InterPro" id="IPR000719">
    <property type="entry name" value="Prot_kinase_dom"/>
</dbReference>
<dbReference type="InterPro" id="IPR017441">
    <property type="entry name" value="Protein_kinase_ATP_BS"/>
</dbReference>
<dbReference type="InterPro" id="IPR008271">
    <property type="entry name" value="Ser/Thr_kinase_AS"/>
</dbReference>
<dbReference type="PANTHER" id="PTHR24056">
    <property type="entry name" value="CELL DIVISION PROTEIN KINASE"/>
    <property type="match status" value="1"/>
</dbReference>
<dbReference type="PANTHER" id="PTHR24056:SF549">
    <property type="entry name" value="CYCLIN-DEPENDENT KINASE A-1"/>
    <property type="match status" value="1"/>
</dbReference>
<dbReference type="Pfam" id="PF00069">
    <property type="entry name" value="Pkinase"/>
    <property type="match status" value="1"/>
</dbReference>
<dbReference type="SMART" id="SM00220">
    <property type="entry name" value="S_TKc"/>
    <property type="match status" value="1"/>
</dbReference>
<dbReference type="SUPFAM" id="SSF56112">
    <property type="entry name" value="Protein kinase-like (PK-like)"/>
    <property type="match status" value="1"/>
</dbReference>
<dbReference type="PROSITE" id="PS00107">
    <property type="entry name" value="PROTEIN_KINASE_ATP"/>
    <property type="match status" value="1"/>
</dbReference>
<dbReference type="PROSITE" id="PS50011">
    <property type="entry name" value="PROTEIN_KINASE_DOM"/>
    <property type="match status" value="1"/>
</dbReference>
<dbReference type="PROSITE" id="PS00108">
    <property type="entry name" value="PROTEIN_KINASE_ST"/>
    <property type="match status" value="1"/>
</dbReference>
<name>CDC2_MAIZE</name>
<keyword id="KW-0067">ATP-binding</keyword>
<keyword id="KW-0131">Cell cycle</keyword>
<keyword id="KW-0132">Cell division</keyword>
<keyword id="KW-0418">Kinase</keyword>
<keyword id="KW-0498">Mitosis</keyword>
<keyword id="KW-0547">Nucleotide-binding</keyword>
<keyword id="KW-0597">Phosphoprotein</keyword>
<keyword id="KW-1185">Reference proteome</keyword>
<keyword id="KW-0723">Serine/threonine-protein kinase</keyword>
<keyword id="KW-0808">Transferase</keyword>
<accession>P23111</accession>
<proteinExistence type="evidence at transcript level"/>
<organism>
    <name type="scientific">Zea mays</name>
    <name type="common">Maize</name>
    <dbReference type="NCBI Taxonomy" id="4577"/>
    <lineage>
        <taxon>Eukaryota</taxon>
        <taxon>Viridiplantae</taxon>
        <taxon>Streptophyta</taxon>
        <taxon>Embryophyta</taxon>
        <taxon>Tracheophyta</taxon>
        <taxon>Spermatophyta</taxon>
        <taxon>Magnoliopsida</taxon>
        <taxon>Liliopsida</taxon>
        <taxon>Poales</taxon>
        <taxon>Poaceae</taxon>
        <taxon>PACMAD clade</taxon>
        <taxon>Panicoideae</taxon>
        <taxon>Andropogonodae</taxon>
        <taxon>Andropogoneae</taxon>
        <taxon>Tripsacinae</taxon>
        <taxon>Zea</taxon>
    </lineage>
</organism>
<comment type="function">
    <text>Plays a key role in the control of the eukaryotic cell cycle. Component of the kinase complex that phosphorylates the repetitive C-terminus of RNA polymerase II.</text>
</comment>
<comment type="catalytic activity">
    <reaction>
        <text>L-seryl-[protein] + ATP = O-phospho-L-seryl-[protein] + ADP + H(+)</text>
        <dbReference type="Rhea" id="RHEA:17989"/>
        <dbReference type="Rhea" id="RHEA-COMP:9863"/>
        <dbReference type="Rhea" id="RHEA-COMP:11604"/>
        <dbReference type="ChEBI" id="CHEBI:15378"/>
        <dbReference type="ChEBI" id="CHEBI:29999"/>
        <dbReference type="ChEBI" id="CHEBI:30616"/>
        <dbReference type="ChEBI" id="CHEBI:83421"/>
        <dbReference type="ChEBI" id="CHEBI:456216"/>
        <dbReference type="EC" id="2.7.11.22"/>
    </reaction>
</comment>
<comment type="catalytic activity">
    <reaction>
        <text>L-threonyl-[protein] + ATP = O-phospho-L-threonyl-[protein] + ADP + H(+)</text>
        <dbReference type="Rhea" id="RHEA:46608"/>
        <dbReference type="Rhea" id="RHEA-COMP:11060"/>
        <dbReference type="Rhea" id="RHEA-COMP:11605"/>
        <dbReference type="ChEBI" id="CHEBI:15378"/>
        <dbReference type="ChEBI" id="CHEBI:30013"/>
        <dbReference type="ChEBI" id="CHEBI:30616"/>
        <dbReference type="ChEBI" id="CHEBI:61977"/>
        <dbReference type="ChEBI" id="CHEBI:456216"/>
        <dbReference type="EC" id="2.7.11.22"/>
    </reaction>
</comment>
<comment type="catalytic activity">
    <reaction>
        <text>[DNA-directed RNA polymerase] + ATP = phospho-[DNA-directed RNA polymerase] + ADP + H(+)</text>
        <dbReference type="Rhea" id="RHEA:10216"/>
        <dbReference type="Rhea" id="RHEA-COMP:11321"/>
        <dbReference type="Rhea" id="RHEA-COMP:11322"/>
        <dbReference type="ChEBI" id="CHEBI:15378"/>
        <dbReference type="ChEBI" id="CHEBI:30616"/>
        <dbReference type="ChEBI" id="CHEBI:43176"/>
        <dbReference type="ChEBI" id="CHEBI:68546"/>
        <dbReference type="ChEBI" id="CHEBI:456216"/>
        <dbReference type="EC" id="2.7.11.23"/>
    </reaction>
</comment>
<comment type="activity regulation">
    <text evidence="1">Phosphorylation at Thr-14 or Tyr-15 inactivates the enzyme, while phosphorylation at Thr-161 activates it.</text>
</comment>
<comment type="similarity">
    <text evidence="4">Belongs to the protein kinase superfamily. CMGC Ser/Thr protein kinase family. CDC2/CDKX subfamily.</text>
</comment>
<feature type="chain" id="PRO_0000085752" description="Cell division control protein 2 homolog">
    <location>
        <begin position="1"/>
        <end position="294"/>
    </location>
</feature>
<feature type="domain" description="Protein kinase" evidence="2">
    <location>
        <begin position="4"/>
        <end position="287"/>
    </location>
</feature>
<feature type="active site" description="Proton acceptor" evidence="2 3">
    <location>
        <position position="127"/>
    </location>
</feature>
<feature type="binding site" evidence="2">
    <location>
        <begin position="10"/>
        <end position="18"/>
    </location>
    <ligand>
        <name>ATP</name>
        <dbReference type="ChEBI" id="CHEBI:30616"/>
    </ligand>
</feature>
<feature type="binding site" evidence="2">
    <location>
        <position position="33"/>
    </location>
    <ligand>
        <name>ATP</name>
        <dbReference type="ChEBI" id="CHEBI:30616"/>
    </ligand>
</feature>
<feature type="modified residue" description="Phosphothreonine" evidence="1">
    <location>
        <position position="14"/>
    </location>
</feature>
<feature type="modified residue" description="Phosphotyrosine" evidence="1">
    <location>
        <position position="15"/>
    </location>
</feature>
<feature type="modified residue" description="Phosphothreonine; by CAK" evidence="1">
    <location>
        <position position="161"/>
    </location>
</feature>
<evidence type="ECO:0000250" key="1"/>
<evidence type="ECO:0000255" key="2">
    <source>
        <dbReference type="PROSITE-ProRule" id="PRU00159"/>
    </source>
</evidence>
<evidence type="ECO:0000255" key="3">
    <source>
        <dbReference type="PROSITE-ProRule" id="PRU10027"/>
    </source>
</evidence>
<evidence type="ECO:0000305" key="4"/>